<reference key="1">
    <citation type="journal article" date="2006" name="J. Bacteriol.">
        <title>Complete genome sequence of the dehalorespiring bacterium Desulfitobacterium hafniense Y51 and comparison with Dehalococcoides ethenogenes 195.</title>
        <authorList>
            <person name="Nonaka H."/>
            <person name="Keresztes G."/>
            <person name="Shinoda Y."/>
            <person name="Ikenaga Y."/>
            <person name="Abe M."/>
            <person name="Naito K."/>
            <person name="Inatomi K."/>
            <person name="Furukawa K."/>
            <person name="Inui M."/>
            <person name="Yukawa H."/>
        </authorList>
    </citation>
    <scope>NUCLEOTIDE SEQUENCE [LARGE SCALE GENOMIC DNA]</scope>
    <source>
        <strain>Y51</strain>
    </source>
</reference>
<feature type="chain" id="PRO_0000367174" description="UPF0173 metal-dependent hydrolase DSY1309">
    <location>
        <begin position="1"/>
        <end position="236"/>
    </location>
</feature>
<keyword id="KW-0378">Hydrolase</keyword>
<keyword id="KW-1185">Reference proteome</keyword>
<dbReference type="EMBL" id="AP008230">
    <property type="protein sequence ID" value="BAE83098.1"/>
    <property type="molecule type" value="Genomic_DNA"/>
</dbReference>
<dbReference type="SMR" id="Q24XZ4"/>
<dbReference type="STRING" id="138119.DSY1309"/>
<dbReference type="KEGG" id="dsy:DSY1309"/>
<dbReference type="eggNOG" id="COG2220">
    <property type="taxonomic scope" value="Bacteria"/>
</dbReference>
<dbReference type="HOGENOM" id="CLU_070010_4_1_9"/>
<dbReference type="Proteomes" id="UP000001946">
    <property type="component" value="Chromosome"/>
</dbReference>
<dbReference type="GO" id="GO:0016787">
    <property type="term" value="F:hydrolase activity"/>
    <property type="evidence" value="ECO:0007669"/>
    <property type="project" value="UniProtKB-UniRule"/>
</dbReference>
<dbReference type="Gene3D" id="3.60.15.10">
    <property type="entry name" value="Ribonuclease Z/Hydroxyacylglutathione hydrolase-like"/>
    <property type="match status" value="1"/>
</dbReference>
<dbReference type="HAMAP" id="MF_00457">
    <property type="entry name" value="UPF0173"/>
    <property type="match status" value="1"/>
</dbReference>
<dbReference type="InterPro" id="IPR001279">
    <property type="entry name" value="Metallo-B-lactamas"/>
</dbReference>
<dbReference type="InterPro" id="IPR036866">
    <property type="entry name" value="RibonucZ/Hydroxyglut_hydro"/>
</dbReference>
<dbReference type="InterPro" id="IPR022877">
    <property type="entry name" value="UPF0173"/>
</dbReference>
<dbReference type="InterPro" id="IPR050114">
    <property type="entry name" value="UPF0173_UPF0282_UlaG_hydrolase"/>
</dbReference>
<dbReference type="NCBIfam" id="NF001911">
    <property type="entry name" value="PRK00685.1"/>
    <property type="match status" value="1"/>
</dbReference>
<dbReference type="PANTHER" id="PTHR43546:SF3">
    <property type="entry name" value="UPF0173 METAL-DEPENDENT HYDROLASE MJ1163"/>
    <property type="match status" value="1"/>
</dbReference>
<dbReference type="PANTHER" id="PTHR43546">
    <property type="entry name" value="UPF0173 METAL-DEPENDENT HYDROLASE MJ1163-RELATED"/>
    <property type="match status" value="1"/>
</dbReference>
<dbReference type="Pfam" id="PF12706">
    <property type="entry name" value="Lactamase_B_2"/>
    <property type="match status" value="1"/>
</dbReference>
<dbReference type="SMART" id="SM00849">
    <property type="entry name" value="Lactamase_B"/>
    <property type="match status" value="1"/>
</dbReference>
<dbReference type="SUPFAM" id="SSF56281">
    <property type="entry name" value="Metallo-hydrolase/oxidoreductase"/>
    <property type="match status" value="1"/>
</dbReference>
<evidence type="ECO:0000255" key="1">
    <source>
        <dbReference type="HAMAP-Rule" id="MF_00457"/>
    </source>
</evidence>
<protein>
    <recommendedName>
        <fullName evidence="1">UPF0173 metal-dependent hydrolase DSY1309</fullName>
    </recommendedName>
</protein>
<sequence>MVKMEIRFHGHACFEIIGEKGRILIDPFLKGNPAADVGPEHFTHLDGILVSHGHSDHLGDAIELSQKTGAPLICVFELARLCARYGAKTHAMHIGGKHTFNFGTVRLTQALHGSVFEPPGEEESFTYAGMACGFLIQMDGKWIYHAGDTGLFGDMELIGRRHPLAAAMLPIGDNYTMGQEEAVYAATLLRPNYLIPMHYNTFPVIQQDPQEFSELLKRKFPASKGEILAPGQSLII</sequence>
<comment type="similarity">
    <text evidence="1">Belongs to the UPF0173 family.</text>
</comment>
<organism>
    <name type="scientific">Desulfitobacterium hafniense (strain Y51)</name>
    <dbReference type="NCBI Taxonomy" id="138119"/>
    <lineage>
        <taxon>Bacteria</taxon>
        <taxon>Bacillati</taxon>
        <taxon>Bacillota</taxon>
        <taxon>Clostridia</taxon>
        <taxon>Eubacteriales</taxon>
        <taxon>Desulfitobacteriaceae</taxon>
        <taxon>Desulfitobacterium</taxon>
    </lineage>
</organism>
<accession>Q24XZ4</accession>
<proteinExistence type="inferred from homology"/>
<gene>
    <name type="ordered locus">DSY1309</name>
</gene>
<name>Y1309_DESHY</name>